<dbReference type="EC" id="2.7.1.4" evidence="1"/>
<dbReference type="EMBL" id="X61004">
    <property type="protein sequence ID" value="CAA43322.1"/>
    <property type="molecule type" value="Genomic_DNA"/>
</dbReference>
<dbReference type="PIR" id="S18523">
    <property type="entry name" value="S18523"/>
</dbReference>
<dbReference type="SMR" id="P26420"/>
<dbReference type="BioCyc" id="MetaCyc:MONOMER-12630"/>
<dbReference type="GO" id="GO:0005524">
    <property type="term" value="F:ATP binding"/>
    <property type="evidence" value="ECO:0007669"/>
    <property type="project" value="UniProtKB-KW"/>
</dbReference>
<dbReference type="GO" id="GO:0008865">
    <property type="term" value="F:fructokinase activity"/>
    <property type="evidence" value="ECO:0007669"/>
    <property type="project" value="UniProtKB-EC"/>
</dbReference>
<dbReference type="GO" id="GO:0006000">
    <property type="term" value="P:fructose metabolic process"/>
    <property type="evidence" value="ECO:0007669"/>
    <property type="project" value="UniProtKB-ARBA"/>
</dbReference>
<dbReference type="CDD" id="cd01167">
    <property type="entry name" value="bac_FRK"/>
    <property type="match status" value="1"/>
</dbReference>
<dbReference type="Gene3D" id="3.40.1190.20">
    <property type="match status" value="1"/>
</dbReference>
<dbReference type="InterPro" id="IPR002173">
    <property type="entry name" value="Carboh/pur_kinase_PfkB_CS"/>
</dbReference>
<dbReference type="InterPro" id="IPR050306">
    <property type="entry name" value="PfkB_Carbo_kinase"/>
</dbReference>
<dbReference type="InterPro" id="IPR011611">
    <property type="entry name" value="PfkB_dom"/>
</dbReference>
<dbReference type="InterPro" id="IPR002139">
    <property type="entry name" value="Ribo/fructo_kinase"/>
</dbReference>
<dbReference type="InterPro" id="IPR029056">
    <property type="entry name" value="Ribokinase-like"/>
</dbReference>
<dbReference type="NCBIfam" id="NF006957">
    <property type="entry name" value="PRK09434.1"/>
    <property type="match status" value="1"/>
</dbReference>
<dbReference type="PANTHER" id="PTHR43085">
    <property type="entry name" value="HEXOKINASE FAMILY MEMBER"/>
    <property type="match status" value="1"/>
</dbReference>
<dbReference type="PANTHER" id="PTHR43085:SF1">
    <property type="entry name" value="PSEUDOURIDINE KINASE-RELATED"/>
    <property type="match status" value="1"/>
</dbReference>
<dbReference type="Pfam" id="PF00294">
    <property type="entry name" value="PfkB"/>
    <property type="match status" value="1"/>
</dbReference>
<dbReference type="PRINTS" id="PR00990">
    <property type="entry name" value="RIBOKINASE"/>
</dbReference>
<dbReference type="SUPFAM" id="SSF53613">
    <property type="entry name" value="Ribokinase-like"/>
    <property type="match status" value="1"/>
</dbReference>
<dbReference type="PROSITE" id="PS00583">
    <property type="entry name" value="PFKB_KINASES_1"/>
    <property type="match status" value="1"/>
</dbReference>
<dbReference type="PROSITE" id="PS00584">
    <property type="entry name" value="PFKB_KINASES_2"/>
    <property type="match status" value="1"/>
</dbReference>
<accession>P26420</accession>
<reference key="1">
    <citation type="journal article" date="1991" name="Mol. Microbiol.">
        <title>Molecular analysis of two fructokinases involved in sucrose metabolism of enteric bacteria.</title>
        <authorList>
            <person name="Aulkemeyer P."/>
            <person name="Ebner R."/>
            <person name="Heilenmann G."/>
            <person name="Jahreis K."/>
            <person name="Schmid K."/>
            <person name="Wrieden S."/>
            <person name="Lengeler J.W."/>
        </authorList>
    </citation>
    <scope>NUCLEOTIDE SEQUENCE [GENOMIC DNA]</scope>
    <scope>FUNCTION</scope>
    <scope>CATALYTIC ACTIVITY</scope>
    <source>
        <strain>1033-5P14 / KAY2026</strain>
    </source>
</reference>
<gene>
    <name type="primary">scrK</name>
</gene>
<feature type="chain" id="PRO_0000080135" description="Fructokinase">
    <location>
        <begin position="1"/>
        <end position="307"/>
    </location>
</feature>
<comment type="function">
    <text evidence="1">Involved in sucrose metabolism.</text>
</comment>
<comment type="catalytic activity">
    <reaction evidence="1">
        <text>D-fructose + ATP = D-fructose 6-phosphate + ADP + H(+)</text>
        <dbReference type="Rhea" id="RHEA:16125"/>
        <dbReference type="ChEBI" id="CHEBI:15378"/>
        <dbReference type="ChEBI" id="CHEBI:30616"/>
        <dbReference type="ChEBI" id="CHEBI:37721"/>
        <dbReference type="ChEBI" id="CHEBI:61527"/>
        <dbReference type="ChEBI" id="CHEBI:456216"/>
        <dbReference type="EC" id="2.7.1.4"/>
    </reaction>
</comment>
<comment type="similarity">
    <text evidence="3">Belongs to the carbohydrate kinase PfkB family.</text>
</comment>
<name>SCRK_KLEPN</name>
<proteinExistence type="evidence at protein level"/>
<keyword id="KW-0067">ATP-binding</keyword>
<keyword id="KW-0119">Carbohydrate metabolism</keyword>
<keyword id="KW-0418">Kinase</keyword>
<keyword id="KW-0547">Nucleotide-binding</keyword>
<keyword id="KW-0808">Transferase</keyword>
<protein>
    <recommendedName>
        <fullName evidence="2">Fructokinase</fullName>
        <ecNumber evidence="1">2.7.1.4</ecNumber>
    </recommendedName>
</protein>
<sequence>MNGKIWVLGDAVVDLLPDGEGRLLQCPGGAPANVAVGVARLGGDSGFIGRVGDDPFGRFMRHTLAQEQVDVNYMRLDAAQRTSTVVVDLDSHGERTFTFMVRPSADLFLQPEDLPPFAAGQWLHVCSIALSAEPSRSTTFAALEAIKRAGGYVSFDPNIRSDLWQDPQDLRDCLDRALALADAIKLSEEELAFISGSDDIVSGIARLNARFQPTLLLVTQGKAGVQAALRGQVSHFPARPVVAVDTTGAGDAFVAGLLAGLAAHGIPDNLAALAPDLALAQTCGALATTAKGAMTALPYKDDLQRSL</sequence>
<evidence type="ECO:0000269" key="1">
    <source>
    </source>
</evidence>
<evidence type="ECO:0000303" key="2">
    <source>
    </source>
</evidence>
<evidence type="ECO:0000305" key="3"/>
<organism>
    <name type="scientific">Klebsiella pneumoniae</name>
    <dbReference type="NCBI Taxonomy" id="573"/>
    <lineage>
        <taxon>Bacteria</taxon>
        <taxon>Pseudomonadati</taxon>
        <taxon>Pseudomonadota</taxon>
        <taxon>Gammaproteobacteria</taxon>
        <taxon>Enterobacterales</taxon>
        <taxon>Enterobacteriaceae</taxon>
        <taxon>Klebsiella/Raoultella group</taxon>
        <taxon>Klebsiella</taxon>
        <taxon>Klebsiella pneumoniae complex</taxon>
    </lineage>
</organism>